<organism>
    <name type="scientific">Anaeromyxobacter sp. (strain Fw109-5)</name>
    <dbReference type="NCBI Taxonomy" id="404589"/>
    <lineage>
        <taxon>Bacteria</taxon>
        <taxon>Pseudomonadati</taxon>
        <taxon>Myxococcota</taxon>
        <taxon>Myxococcia</taxon>
        <taxon>Myxococcales</taxon>
        <taxon>Cystobacterineae</taxon>
        <taxon>Anaeromyxobacteraceae</taxon>
        <taxon>Anaeromyxobacter</taxon>
    </lineage>
</organism>
<dbReference type="EC" id="2.5.1.75" evidence="1"/>
<dbReference type="EMBL" id="CP000769">
    <property type="protein sequence ID" value="ABS26514.1"/>
    <property type="molecule type" value="Genomic_DNA"/>
</dbReference>
<dbReference type="RefSeq" id="WP_012097100.1">
    <property type="nucleotide sequence ID" value="NC_009675.1"/>
</dbReference>
<dbReference type="SMR" id="A7HCR8"/>
<dbReference type="STRING" id="404589.Anae109_2312"/>
<dbReference type="KEGG" id="afw:Anae109_2312"/>
<dbReference type="eggNOG" id="COG0324">
    <property type="taxonomic scope" value="Bacteria"/>
</dbReference>
<dbReference type="HOGENOM" id="CLU_032616_0_1_7"/>
<dbReference type="OrthoDB" id="9776390at2"/>
<dbReference type="Proteomes" id="UP000006382">
    <property type="component" value="Chromosome"/>
</dbReference>
<dbReference type="GO" id="GO:0005524">
    <property type="term" value="F:ATP binding"/>
    <property type="evidence" value="ECO:0007669"/>
    <property type="project" value="UniProtKB-UniRule"/>
</dbReference>
<dbReference type="GO" id="GO:0052381">
    <property type="term" value="F:tRNA dimethylallyltransferase activity"/>
    <property type="evidence" value="ECO:0007669"/>
    <property type="project" value="UniProtKB-UniRule"/>
</dbReference>
<dbReference type="GO" id="GO:0006400">
    <property type="term" value="P:tRNA modification"/>
    <property type="evidence" value="ECO:0007669"/>
    <property type="project" value="TreeGrafter"/>
</dbReference>
<dbReference type="Gene3D" id="1.10.20.140">
    <property type="match status" value="1"/>
</dbReference>
<dbReference type="Gene3D" id="3.40.50.300">
    <property type="entry name" value="P-loop containing nucleotide triphosphate hydrolases"/>
    <property type="match status" value="1"/>
</dbReference>
<dbReference type="HAMAP" id="MF_00185">
    <property type="entry name" value="IPP_trans"/>
    <property type="match status" value="1"/>
</dbReference>
<dbReference type="InterPro" id="IPR039657">
    <property type="entry name" value="Dimethylallyltransferase"/>
</dbReference>
<dbReference type="InterPro" id="IPR018022">
    <property type="entry name" value="IPT"/>
</dbReference>
<dbReference type="InterPro" id="IPR027417">
    <property type="entry name" value="P-loop_NTPase"/>
</dbReference>
<dbReference type="NCBIfam" id="TIGR00174">
    <property type="entry name" value="miaA"/>
    <property type="match status" value="1"/>
</dbReference>
<dbReference type="PANTHER" id="PTHR11088">
    <property type="entry name" value="TRNA DIMETHYLALLYLTRANSFERASE"/>
    <property type="match status" value="1"/>
</dbReference>
<dbReference type="PANTHER" id="PTHR11088:SF60">
    <property type="entry name" value="TRNA DIMETHYLALLYLTRANSFERASE"/>
    <property type="match status" value="1"/>
</dbReference>
<dbReference type="Pfam" id="PF01715">
    <property type="entry name" value="IPPT"/>
    <property type="match status" value="1"/>
</dbReference>
<dbReference type="SUPFAM" id="SSF52540">
    <property type="entry name" value="P-loop containing nucleoside triphosphate hydrolases"/>
    <property type="match status" value="1"/>
</dbReference>
<proteinExistence type="inferred from homology"/>
<keyword id="KW-0067">ATP-binding</keyword>
<keyword id="KW-0460">Magnesium</keyword>
<keyword id="KW-0547">Nucleotide-binding</keyword>
<keyword id="KW-1185">Reference proteome</keyword>
<keyword id="KW-0808">Transferase</keyword>
<keyword id="KW-0819">tRNA processing</keyword>
<name>MIAA_ANADF</name>
<gene>
    <name evidence="1" type="primary">miaA</name>
    <name type="ordered locus">Anae109_2312</name>
</gene>
<comment type="function">
    <text evidence="1">Catalyzes the transfer of a dimethylallyl group onto the adenine at position 37 in tRNAs that read codons beginning with uridine, leading to the formation of N6-(dimethylallyl)adenosine (i(6)A).</text>
</comment>
<comment type="catalytic activity">
    <reaction evidence="1">
        <text>adenosine(37) in tRNA + dimethylallyl diphosphate = N(6)-dimethylallyladenosine(37) in tRNA + diphosphate</text>
        <dbReference type="Rhea" id="RHEA:26482"/>
        <dbReference type="Rhea" id="RHEA-COMP:10162"/>
        <dbReference type="Rhea" id="RHEA-COMP:10375"/>
        <dbReference type="ChEBI" id="CHEBI:33019"/>
        <dbReference type="ChEBI" id="CHEBI:57623"/>
        <dbReference type="ChEBI" id="CHEBI:74411"/>
        <dbReference type="ChEBI" id="CHEBI:74415"/>
        <dbReference type="EC" id="2.5.1.75"/>
    </reaction>
</comment>
<comment type="cofactor">
    <cofactor evidence="1">
        <name>Mg(2+)</name>
        <dbReference type="ChEBI" id="CHEBI:18420"/>
    </cofactor>
</comment>
<comment type="subunit">
    <text evidence="1">Monomer.</text>
</comment>
<comment type="similarity">
    <text evidence="1">Belongs to the IPP transferase family.</text>
</comment>
<reference key="1">
    <citation type="journal article" date="2015" name="Genome Announc.">
        <title>Complete genome sequence of Anaeromyxobacter sp. Fw109-5, an anaerobic, metal-reducing bacterium isolated from a contaminated subsurface environment.</title>
        <authorList>
            <person name="Hwang C."/>
            <person name="Copeland A."/>
            <person name="Lucas S."/>
            <person name="Lapidus A."/>
            <person name="Barry K."/>
            <person name="Glavina Del Rio T."/>
            <person name="Dalin E."/>
            <person name="Tice H."/>
            <person name="Pitluck S."/>
            <person name="Sims D."/>
            <person name="Brettin T."/>
            <person name="Bruce D.C."/>
            <person name="Detter J.C."/>
            <person name="Han C.S."/>
            <person name="Schmutz J."/>
            <person name="Larimer F.W."/>
            <person name="Land M.L."/>
            <person name="Hauser L.J."/>
            <person name="Kyrpides N."/>
            <person name="Lykidis A."/>
            <person name="Richardson P."/>
            <person name="Belieav A."/>
            <person name="Sanford R.A."/>
            <person name="Loeffler F.E."/>
            <person name="Fields M.W."/>
        </authorList>
    </citation>
    <scope>NUCLEOTIDE SEQUENCE [LARGE SCALE GENOMIC DNA]</scope>
    <source>
        <strain>Fw109-5</strain>
    </source>
</reference>
<accession>A7HCR8</accession>
<protein>
    <recommendedName>
        <fullName evidence="1">tRNA dimethylallyltransferase</fullName>
        <ecNumber evidence="1">2.5.1.75</ecNumber>
    </recommendedName>
    <alternativeName>
        <fullName evidence="1">Dimethylallyl diphosphate:tRNA dimethylallyltransferase</fullName>
        <shortName evidence="1">DMAPP:tRNA dimethylallyltransferase</shortName>
        <shortName evidence="1">DMATase</shortName>
    </alternativeName>
    <alternativeName>
        <fullName evidence="1">Isopentenyl-diphosphate:tRNA isopentenyltransferase</fullName>
        <shortName evidence="1">IPP transferase</shortName>
        <shortName evidence="1">IPPT</shortName>
        <shortName evidence="1">IPTase</shortName>
    </alternativeName>
</protein>
<feature type="chain" id="PRO_1000077384" description="tRNA dimethylallyltransferase">
    <location>
        <begin position="1"/>
        <end position="300"/>
    </location>
</feature>
<feature type="region of interest" description="Interaction with substrate tRNA" evidence="1">
    <location>
        <begin position="34"/>
        <end position="37"/>
    </location>
</feature>
<feature type="binding site" evidence="1">
    <location>
        <begin position="9"/>
        <end position="16"/>
    </location>
    <ligand>
        <name>ATP</name>
        <dbReference type="ChEBI" id="CHEBI:30616"/>
    </ligand>
</feature>
<feature type="binding site" evidence="1">
    <location>
        <begin position="11"/>
        <end position="16"/>
    </location>
    <ligand>
        <name>substrate</name>
    </ligand>
</feature>
<feature type="site" description="Interaction with substrate tRNA" evidence="1">
    <location>
        <position position="100"/>
    </location>
</feature>
<feature type="site" description="Interaction with substrate tRNA" evidence="1">
    <location>
        <position position="122"/>
    </location>
</feature>
<sequence length="300" mass="32068">MNRLLVIAGPTASGKTALAVALARRLGGEIVNADSQQVYRGLDVGTAKPTAAERAAVPHHLLDVAEAGEGMDAARFAALADAAIADVAARGRLPIVAGGTGLYLRALLHGVVAAPGRDAALRARLEEEAARLGRPALHARLAALDPDAAARIRPNDLVRIVRALEIAAGGTRPSELYARHAFREDRYAARLLALDPPRASLHARIDARVAEMFAGGLLEEARALAARFGDALPPKLPIGYAEAIGCVRGELQLAEAVRRVQVAHRRYARRQVIWLRRERGVEWIAPPFDADDLARRVENG</sequence>
<evidence type="ECO:0000255" key="1">
    <source>
        <dbReference type="HAMAP-Rule" id="MF_00185"/>
    </source>
</evidence>